<evidence type="ECO:0000250" key="1"/>
<evidence type="ECO:0000250" key="2">
    <source>
        <dbReference type="UniProtKB" id="P29144"/>
    </source>
</evidence>
<evidence type="ECO:0000250" key="3">
    <source>
        <dbReference type="UniProtKB" id="Q64514"/>
    </source>
</evidence>
<evidence type="ECO:0000255" key="4">
    <source>
        <dbReference type="PROSITE-ProRule" id="PRU01240"/>
    </source>
</evidence>
<evidence type="ECO:0000256" key="5">
    <source>
        <dbReference type="SAM" id="MobiDB-lite"/>
    </source>
</evidence>
<evidence type="ECO:0000305" key="6"/>
<protein>
    <recommendedName>
        <fullName>Tripeptidyl-peptidase 2</fullName>
        <shortName>TPP-2</shortName>
        <ecNumber evidence="2">3.4.14.10</ecNumber>
    </recommendedName>
    <alternativeName>
        <fullName>Tripeptidyl aminopeptidase</fullName>
    </alternativeName>
    <alternativeName>
        <fullName>Tripeptidyl-peptidase II</fullName>
        <shortName>TPP-II</shortName>
    </alternativeName>
</protein>
<comment type="function">
    <text evidence="2 3">Cytosolic tripeptidyl-peptidase that releases N-terminal tripeptides from polypeptides and is a component of the proteolytic cascade acting downstream of the 26S proteasome in the ubiquitin-proteasome pathway. It plays an important role in intracellular amino acid homeostasis (By similarity). Stimulates adipogenesis (By similarity).</text>
</comment>
<comment type="catalytic activity">
    <reaction evidence="2">
        <text>Release of an N-terminal tripeptide from a polypeptide.</text>
        <dbReference type="EC" id="3.4.14.10"/>
    </reaction>
</comment>
<comment type="subcellular location">
    <subcellularLocation>
        <location>Cytoplasm</location>
    </subcellularLocation>
    <subcellularLocation>
        <location>Nucleus</location>
    </subcellularLocation>
    <text evidence="1">Translocates to the nucleus in response to gamma-irradiation.</text>
</comment>
<comment type="miscellaneous">
    <text evidence="1">The limitation of proteolytic products to tripeptides is achieved by tailoring the size of the substrate-binding cleft: the two negatively charged residues Glu-305 and Glu-331 that are blocking position P4 limit the number of residues that can be accommodated in the binding cleft and thus create a molecular ruler. At the same time, they orient substrates so that the tripeptides are removed exclusively from the N-terminus (By similarity).</text>
</comment>
<comment type="similarity">
    <text evidence="6">Belongs to the peptidase S8 family.</text>
</comment>
<sequence>MATAATEEPFPFHGLLPKKETGASSFLCRYPEYDGRGVLIAVLDTGVDPGAPGMQVTTDGKPKIIDIIDTTGSGDVNTATEVEPKDGEITGLSGRVLKIPANWTNPSGKYHIGIKNGYDFYPKALKERIQKERKEKIWDPIHRVALAEACRKQEEFDIANNGSSQANKLIKEELQSQVELLNSFEKKYSDPGPVYDCLVWHDGETWRACVDSNENGDLGKSTVLRNYKEAQEYGSFGTAEMLNYSVNIYDDGNLLSIVTSGGAHGTHVASIAAGHFPEEPERNGVAPGAQILSIKIGDTRLSTMETGTGLIRAMIEVINHKCDLVNYSYGEATHWPNSGRICEVINEAVWKHNTIYVSSAGNNGPCLSTVGCPGGTTSSVIGVGAYVSPDMMVAEYSLREKLPANQYTWSSRGPSADGALGVSISAPGGAIASVPNWTLRGTQLMNGTSMSSPNACGGIALVLSGLKANNVDYTVHSVRRALENTAIKADNIEVFAQGHGIIQVDKAYDYLIQNTSFANRLGFTVTVGNNRGIYLRDPVQVAAPSDHGVGIEPVFPENTENSEKISFQLHLALTSNSSWVQCPSHLELMNQCRHINIRVDPRGLREGLHYTEVCGYDIASPNAGPLFRVPITAVIAAKVNESSHYDLAFTDVHFKPGQIRRHFVEVPEGATWAEVTVCSCSSEVSAKFVLHAVQLVKQRAYRSHEFYKFCSLPEKGTLIEAFPVLGGKAIEFCIARWWASLSDVNIDYTISFHGIVCTAPQLNIHASEGINRFDVQSSLKYEDLAPCITLKSWVQTLRPVNAKTRPLGSRDVLPNNRQLYEMVLTYSFHQPKSGEVTPSCPLLCELLYESEFDSQLWIIFDQNKRQMGSGDAYPHQYSLKLEKGDYTIRLQIRHEQISDLDRLKDLPFIVSHRLSNTLSLDIHENHSLALLGKKKSSSLTLPPKYNQPFFVTSLPDDKIPKGAGPGCYLAGSLTLSKTELGKKADVIPVHYYLIPPPTKTKNGSKDKEKDSEKEKDLKEEFTEALRDLKIQWMTKLDSTDIYNELKETYPAYLPLYVARLHQLDAEKERMKRLNEIVDAANAVISHIDQTALAVYIAMKTDPRPDAATIKNDMDKQKSTLVDALCRKGCALADHLLHAQPHDGAAAGDAEAKEEEGESTLESLSETYWETTKWTDLFDTKVLTFAYKHALVNKMYGRGLKFATKLVEEKPTKENWKNCIQLMKLLGWTHCASFTENWLPIMYPPDYCVF</sequence>
<name>TPP2_RAT</name>
<organism>
    <name type="scientific">Rattus norvegicus</name>
    <name type="common">Rat</name>
    <dbReference type="NCBI Taxonomy" id="10116"/>
    <lineage>
        <taxon>Eukaryota</taxon>
        <taxon>Metazoa</taxon>
        <taxon>Chordata</taxon>
        <taxon>Craniata</taxon>
        <taxon>Vertebrata</taxon>
        <taxon>Euteleostomi</taxon>
        <taxon>Mammalia</taxon>
        <taxon>Eutheria</taxon>
        <taxon>Euarchontoglires</taxon>
        <taxon>Glires</taxon>
        <taxon>Rodentia</taxon>
        <taxon>Myomorpha</taxon>
        <taxon>Muroidea</taxon>
        <taxon>Muridae</taxon>
        <taxon>Murinae</taxon>
        <taxon>Rattus</taxon>
    </lineage>
</organism>
<accession>Q64560</accession>
<feature type="initiator methionine" description="Removed" evidence="2">
    <location>
        <position position="1"/>
    </location>
</feature>
<feature type="chain" id="PRO_0000076424" description="Tripeptidyl-peptidase 2">
    <location>
        <begin position="2"/>
        <end position="1249"/>
    </location>
</feature>
<feature type="domain" description="Peptidase S8" evidence="4">
    <location>
        <begin position="9"/>
        <end position="508"/>
    </location>
</feature>
<feature type="region of interest" description="Disordered" evidence="5">
    <location>
        <begin position="998"/>
        <end position="1018"/>
    </location>
</feature>
<feature type="compositionally biased region" description="Basic and acidic residues" evidence="5">
    <location>
        <begin position="1003"/>
        <end position="1018"/>
    </location>
</feature>
<feature type="active site" description="Charge relay system" evidence="4">
    <location>
        <position position="44"/>
    </location>
</feature>
<feature type="active site" description="Charge relay system" evidence="4">
    <location>
        <position position="264"/>
    </location>
</feature>
<feature type="active site" description="Charge relay system" evidence="4">
    <location>
        <position position="449"/>
    </location>
</feature>
<feature type="modified residue" description="N-acetylalanine" evidence="2">
    <location>
        <position position="2"/>
    </location>
</feature>
<feature type="modified residue" description="N6-acetyllysine" evidence="3">
    <location>
        <position position="401"/>
    </location>
</feature>
<feature type="modified residue" description="Phosphoserine" evidence="2">
    <location>
        <position position="915"/>
    </location>
</feature>
<reference key="1">
    <citation type="journal article" date="1996" name="Nature">
        <title>Characterization and inhibition of a cholecystokinin-inactivating serine peptidase.</title>
        <authorList>
            <person name="Rose C."/>
            <person name="Vargas F."/>
            <person name="Facchinetti P."/>
            <person name="Bourgeat P."/>
            <person name="Bambal R.B."/>
            <person name="Bishop P.B."/>
            <person name="Chan S.M."/>
            <person name="Moore A.N."/>
            <person name="Ganellin C.R."/>
            <person name="Schwartz J.C."/>
        </authorList>
    </citation>
    <scope>NUCLEOTIDE SEQUENCE [MRNA]</scope>
    <source>
        <strain>Sprague-Dawley</strain>
        <tissue>Brain</tissue>
    </source>
</reference>
<dbReference type="EC" id="3.4.14.10" evidence="2"/>
<dbReference type="EMBL" id="U50194">
    <property type="protein sequence ID" value="AAA93458.1"/>
    <property type="molecule type" value="mRNA"/>
</dbReference>
<dbReference type="PIR" id="S68431">
    <property type="entry name" value="S68431"/>
</dbReference>
<dbReference type="RefSeq" id="NP_112399.1">
    <property type="nucleotide sequence ID" value="NM_031137.2"/>
</dbReference>
<dbReference type="SMR" id="Q64560"/>
<dbReference type="BioGRID" id="249673">
    <property type="interactions" value="1"/>
</dbReference>
<dbReference type="FunCoup" id="Q64560">
    <property type="interactions" value="4790"/>
</dbReference>
<dbReference type="IntAct" id="Q64560">
    <property type="interactions" value="18"/>
</dbReference>
<dbReference type="STRING" id="10116.ENSRNOP00000074045"/>
<dbReference type="BindingDB" id="Q64560"/>
<dbReference type="ChEMBL" id="CHEMBL4675"/>
<dbReference type="MEROPS" id="S08.A56"/>
<dbReference type="iPTMnet" id="Q64560"/>
<dbReference type="PhosphoSitePlus" id="Q64560"/>
<dbReference type="jPOST" id="Q64560"/>
<dbReference type="PaxDb" id="10116-ENSRNOP00000015393"/>
<dbReference type="GeneID" id="81815"/>
<dbReference type="KEGG" id="rno:81815"/>
<dbReference type="UCSC" id="RGD:621584">
    <property type="organism name" value="rat"/>
</dbReference>
<dbReference type="AGR" id="RGD:621584"/>
<dbReference type="CTD" id="7174"/>
<dbReference type="RGD" id="621584">
    <property type="gene designation" value="Tpp2"/>
</dbReference>
<dbReference type="VEuPathDB" id="HostDB:ENSRNOG00000011194"/>
<dbReference type="eggNOG" id="KOG1114">
    <property type="taxonomic scope" value="Eukaryota"/>
</dbReference>
<dbReference type="InParanoid" id="Q64560"/>
<dbReference type="BRENDA" id="3.4.14.10">
    <property type="organism ID" value="5301"/>
</dbReference>
<dbReference type="Reactome" id="R-RNO-983168">
    <property type="pathway name" value="Antigen processing: Ubiquitination &amp; Proteasome degradation"/>
</dbReference>
<dbReference type="PRO" id="PR:Q64560"/>
<dbReference type="Proteomes" id="UP000002494">
    <property type="component" value="Chromosome 9"/>
</dbReference>
<dbReference type="Bgee" id="ENSRNOG00000011194">
    <property type="expression patterns" value="Expressed in esophagus and 19 other cell types or tissues"/>
</dbReference>
<dbReference type="GO" id="GO:0005829">
    <property type="term" value="C:cytosol"/>
    <property type="evidence" value="ECO:0000318"/>
    <property type="project" value="GO_Central"/>
</dbReference>
<dbReference type="GO" id="GO:0005634">
    <property type="term" value="C:nucleus"/>
    <property type="evidence" value="ECO:0007669"/>
    <property type="project" value="UniProtKB-SubCell"/>
</dbReference>
<dbReference type="GO" id="GO:0004177">
    <property type="term" value="F:aminopeptidase activity"/>
    <property type="evidence" value="ECO:0000250"/>
    <property type="project" value="UniProtKB"/>
</dbReference>
<dbReference type="GO" id="GO:0042802">
    <property type="term" value="F:identical protein binding"/>
    <property type="evidence" value="ECO:0000266"/>
    <property type="project" value="RGD"/>
</dbReference>
<dbReference type="GO" id="GO:0042277">
    <property type="term" value="F:peptide binding"/>
    <property type="evidence" value="ECO:0000314"/>
    <property type="project" value="RGD"/>
</dbReference>
<dbReference type="GO" id="GO:0004252">
    <property type="term" value="F:serine-type endopeptidase activity"/>
    <property type="evidence" value="ECO:0007669"/>
    <property type="project" value="InterPro"/>
</dbReference>
<dbReference type="GO" id="GO:0008240">
    <property type="term" value="F:tripeptidyl-peptidase activity"/>
    <property type="evidence" value="ECO:0000314"/>
    <property type="project" value="RGD"/>
</dbReference>
<dbReference type="GO" id="GO:0080144">
    <property type="term" value="P:intracellular amino acid homeostasis"/>
    <property type="evidence" value="ECO:0000266"/>
    <property type="project" value="RGD"/>
</dbReference>
<dbReference type="GO" id="GO:0030163">
    <property type="term" value="P:protein catabolic process"/>
    <property type="evidence" value="ECO:0000314"/>
    <property type="project" value="RGD"/>
</dbReference>
<dbReference type="GO" id="GO:0006508">
    <property type="term" value="P:proteolysis"/>
    <property type="evidence" value="ECO:0007669"/>
    <property type="project" value="UniProtKB-KW"/>
</dbReference>
<dbReference type="CDD" id="cd04857">
    <property type="entry name" value="Peptidases_S8_Tripeptidyl_Aminopeptidase_II"/>
    <property type="match status" value="1"/>
</dbReference>
<dbReference type="FunFam" id="1.25.40.710:FF:000001">
    <property type="entry name" value="Tripeptidyl peptidase 2"/>
    <property type="match status" value="1"/>
</dbReference>
<dbReference type="FunFam" id="2.60.40.3170:FF:000001">
    <property type="entry name" value="Tripeptidyl peptidase 2"/>
    <property type="match status" value="1"/>
</dbReference>
<dbReference type="FunFam" id="3.40.50.200:FF:000003">
    <property type="entry name" value="Tripeptidyl peptidase 2"/>
    <property type="match status" value="1"/>
</dbReference>
<dbReference type="FunFam" id="3.40.50.200:FF:000009">
    <property type="entry name" value="tripeptidyl-peptidase 2 isoform X1"/>
    <property type="match status" value="1"/>
</dbReference>
<dbReference type="Gene3D" id="1.25.40.710">
    <property type="match status" value="1"/>
</dbReference>
<dbReference type="Gene3D" id="2.60.40.3170">
    <property type="match status" value="1"/>
</dbReference>
<dbReference type="Gene3D" id="6.10.250.3080">
    <property type="match status" value="1"/>
</dbReference>
<dbReference type="Gene3D" id="3.40.50.200">
    <property type="entry name" value="Peptidase S8/S53 domain"/>
    <property type="match status" value="2"/>
</dbReference>
<dbReference type="InterPro" id="IPR000209">
    <property type="entry name" value="Peptidase_S8/S53_dom"/>
</dbReference>
<dbReference type="InterPro" id="IPR036852">
    <property type="entry name" value="Peptidase_S8/S53_dom_sf"/>
</dbReference>
<dbReference type="InterPro" id="IPR022398">
    <property type="entry name" value="Peptidase_S8_His-AS"/>
</dbReference>
<dbReference type="InterPro" id="IPR023828">
    <property type="entry name" value="Peptidase_S8_Ser-AS"/>
</dbReference>
<dbReference type="InterPro" id="IPR050131">
    <property type="entry name" value="Peptidase_S8_subtilisin-like"/>
</dbReference>
<dbReference type="InterPro" id="IPR015500">
    <property type="entry name" value="Peptidase_S8_subtilisin-rel"/>
</dbReference>
<dbReference type="InterPro" id="IPR034051">
    <property type="entry name" value="TPP_II_domain"/>
</dbReference>
<dbReference type="InterPro" id="IPR022232">
    <property type="entry name" value="TPPII_C_art"/>
</dbReference>
<dbReference type="InterPro" id="IPR046939">
    <property type="entry name" value="TPPII_C_sf"/>
</dbReference>
<dbReference type="InterPro" id="IPR048384">
    <property type="entry name" value="TPPII_GBD"/>
</dbReference>
<dbReference type="InterPro" id="IPR048383">
    <property type="entry name" value="TPPII_Ig-like-1"/>
</dbReference>
<dbReference type="InterPro" id="IPR022229">
    <property type="entry name" value="TPPII_Ig-like-2"/>
</dbReference>
<dbReference type="InterPro" id="IPR046940">
    <property type="entry name" value="TPPII_Ig-like_sf"/>
</dbReference>
<dbReference type="PANTHER" id="PTHR43806">
    <property type="entry name" value="PEPTIDASE S8"/>
    <property type="match status" value="1"/>
</dbReference>
<dbReference type="PANTHER" id="PTHR43806:SF14">
    <property type="entry name" value="TRIPEPTIDYL-PEPTIDASE 2"/>
    <property type="match status" value="1"/>
</dbReference>
<dbReference type="Pfam" id="PF00082">
    <property type="entry name" value="Peptidase_S8"/>
    <property type="match status" value="1"/>
</dbReference>
<dbReference type="Pfam" id="PF12580">
    <property type="entry name" value="TPPII"/>
    <property type="match status" value="1"/>
</dbReference>
<dbReference type="Pfam" id="PF12583">
    <property type="entry name" value="TPPII_C"/>
    <property type="match status" value="1"/>
</dbReference>
<dbReference type="Pfam" id="PF21316">
    <property type="entry name" value="TPPII_GBD"/>
    <property type="match status" value="1"/>
</dbReference>
<dbReference type="Pfam" id="PF21223">
    <property type="entry name" value="TPPII_Ig-like-1"/>
    <property type="match status" value="1"/>
</dbReference>
<dbReference type="PRINTS" id="PR00723">
    <property type="entry name" value="SUBTILISIN"/>
</dbReference>
<dbReference type="SUPFAM" id="SSF52743">
    <property type="entry name" value="Subtilisin-like"/>
    <property type="match status" value="1"/>
</dbReference>
<dbReference type="PROSITE" id="PS51892">
    <property type="entry name" value="SUBTILASE"/>
    <property type="match status" value="1"/>
</dbReference>
<dbReference type="PROSITE" id="PS00137">
    <property type="entry name" value="SUBTILASE_HIS"/>
    <property type="match status" value="1"/>
</dbReference>
<dbReference type="PROSITE" id="PS00138">
    <property type="entry name" value="SUBTILASE_SER"/>
    <property type="match status" value="1"/>
</dbReference>
<keyword id="KW-0007">Acetylation</keyword>
<keyword id="KW-0031">Aminopeptidase</keyword>
<keyword id="KW-0963">Cytoplasm</keyword>
<keyword id="KW-0378">Hydrolase</keyword>
<keyword id="KW-0539">Nucleus</keyword>
<keyword id="KW-0597">Phosphoprotein</keyword>
<keyword id="KW-0645">Protease</keyword>
<keyword id="KW-1185">Reference proteome</keyword>
<keyword id="KW-0720">Serine protease</keyword>
<proteinExistence type="evidence at transcript level"/>
<gene>
    <name type="primary">Tpp2</name>
</gene>